<keyword id="KW-0067">ATP-binding</keyword>
<keyword id="KW-0414">Isoprene biosynthesis</keyword>
<keyword id="KW-0418">Kinase</keyword>
<keyword id="KW-0547">Nucleotide-binding</keyword>
<keyword id="KW-0808">Transferase</keyword>
<accession>B5FBW7</accession>
<gene>
    <name evidence="1" type="primary">ispE</name>
    <name type="ordered locus">VFMJ11_0801</name>
</gene>
<sequence>MITKTTRWPSPAKLNLFLYINGQQENGYHELQTLFQFIDLCDHLTITSNQSGQITLAPDIPGVKTEDNLIWKAATLLQQHSQCEFGAHIEIEKILPMGGGIGGGSSNAATVLIALNFLWQLNLSNDTLAALGVKLGADVPIFVHGFAAFAEGIGEKLQPATPKELWYVLIKPEVSIATVDVFTHPDLVRNTPKQPLNALLEATYVNDCEKIVRSVYPEVDYQLSWLLEYAPSRLTGTGACVFAEFNSEKEAQDVYSLIPDNATGFIARGMNTSPLNRTLEEYKSLCKI</sequence>
<proteinExistence type="inferred from homology"/>
<dbReference type="EC" id="2.7.1.148" evidence="1"/>
<dbReference type="EMBL" id="CP001139">
    <property type="protein sequence ID" value="ACH66983.1"/>
    <property type="molecule type" value="Genomic_DNA"/>
</dbReference>
<dbReference type="RefSeq" id="WP_012534115.1">
    <property type="nucleotide sequence ID" value="NC_011184.1"/>
</dbReference>
<dbReference type="SMR" id="B5FBW7"/>
<dbReference type="KEGG" id="vfm:VFMJ11_0801"/>
<dbReference type="HOGENOM" id="CLU_053057_3_0_6"/>
<dbReference type="UniPathway" id="UPA00056">
    <property type="reaction ID" value="UER00094"/>
</dbReference>
<dbReference type="Proteomes" id="UP000001857">
    <property type="component" value="Chromosome I"/>
</dbReference>
<dbReference type="GO" id="GO:0050515">
    <property type="term" value="F:4-(cytidine 5'-diphospho)-2-C-methyl-D-erythritol kinase activity"/>
    <property type="evidence" value="ECO:0007669"/>
    <property type="project" value="UniProtKB-UniRule"/>
</dbReference>
<dbReference type="GO" id="GO:0005524">
    <property type="term" value="F:ATP binding"/>
    <property type="evidence" value="ECO:0007669"/>
    <property type="project" value="UniProtKB-UniRule"/>
</dbReference>
<dbReference type="GO" id="GO:0019288">
    <property type="term" value="P:isopentenyl diphosphate biosynthetic process, methylerythritol 4-phosphate pathway"/>
    <property type="evidence" value="ECO:0007669"/>
    <property type="project" value="UniProtKB-UniRule"/>
</dbReference>
<dbReference type="GO" id="GO:0016114">
    <property type="term" value="P:terpenoid biosynthetic process"/>
    <property type="evidence" value="ECO:0007669"/>
    <property type="project" value="InterPro"/>
</dbReference>
<dbReference type="FunFam" id="3.30.230.10:FF:000022">
    <property type="entry name" value="4-diphosphocytidyl-2-C-methyl-D-erythritol kinase"/>
    <property type="match status" value="1"/>
</dbReference>
<dbReference type="Gene3D" id="3.30.230.10">
    <property type="match status" value="1"/>
</dbReference>
<dbReference type="Gene3D" id="3.30.70.890">
    <property type="entry name" value="GHMP kinase, C-terminal domain"/>
    <property type="match status" value="1"/>
</dbReference>
<dbReference type="HAMAP" id="MF_00061">
    <property type="entry name" value="IspE"/>
    <property type="match status" value="1"/>
</dbReference>
<dbReference type="InterPro" id="IPR013750">
    <property type="entry name" value="GHMP_kinase_C_dom"/>
</dbReference>
<dbReference type="InterPro" id="IPR036554">
    <property type="entry name" value="GHMP_kinase_C_sf"/>
</dbReference>
<dbReference type="InterPro" id="IPR006204">
    <property type="entry name" value="GHMP_kinase_N_dom"/>
</dbReference>
<dbReference type="InterPro" id="IPR004424">
    <property type="entry name" value="IspE"/>
</dbReference>
<dbReference type="InterPro" id="IPR020568">
    <property type="entry name" value="Ribosomal_Su5_D2-typ_SF"/>
</dbReference>
<dbReference type="InterPro" id="IPR014721">
    <property type="entry name" value="Ribsml_uS5_D2-typ_fold_subgr"/>
</dbReference>
<dbReference type="NCBIfam" id="TIGR00154">
    <property type="entry name" value="ispE"/>
    <property type="match status" value="1"/>
</dbReference>
<dbReference type="PANTHER" id="PTHR43527">
    <property type="entry name" value="4-DIPHOSPHOCYTIDYL-2-C-METHYL-D-ERYTHRITOL KINASE, CHLOROPLASTIC"/>
    <property type="match status" value="1"/>
</dbReference>
<dbReference type="PANTHER" id="PTHR43527:SF2">
    <property type="entry name" value="4-DIPHOSPHOCYTIDYL-2-C-METHYL-D-ERYTHRITOL KINASE, CHLOROPLASTIC"/>
    <property type="match status" value="1"/>
</dbReference>
<dbReference type="Pfam" id="PF08544">
    <property type="entry name" value="GHMP_kinases_C"/>
    <property type="match status" value="1"/>
</dbReference>
<dbReference type="Pfam" id="PF00288">
    <property type="entry name" value="GHMP_kinases_N"/>
    <property type="match status" value="1"/>
</dbReference>
<dbReference type="PIRSF" id="PIRSF010376">
    <property type="entry name" value="IspE"/>
    <property type="match status" value="1"/>
</dbReference>
<dbReference type="SUPFAM" id="SSF55060">
    <property type="entry name" value="GHMP Kinase, C-terminal domain"/>
    <property type="match status" value="1"/>
</dbReference>
<dbReference type="SUPFAM" id="SSF54211">
    <property type="entry name" value="Ribosomal protein S5 domain 2-like"/>
    <property type="match status" value="1"/>
</dbReference>
<evidence type="ECO:0000255" key="1">
    <source>
        <dbReference type="HAMAP-Rule" id="MF_00061"/>
    </source>
</evidence>
<organism>
    <name type="scientific">Aliivibrio fischeri (strain MJ11)</name>
    <name type="common">Vibrio fischeri</name>
    <dbReference type="NCBI Taxonomy" id="388396"/>
    <lineage>
        <taxon>Bacteria</taxon>
        <taxon>Pseudomonadati</taxon>
        <taxon>Pseudomonadota</taxon>
        <taxon>Gammaproteobacteria</taxon>
        <taxon>Vibrionales</taxon>
        <taxon>Vibrionaceae</taxon>
        <taxon>Aliivibrio</taxon>
    </lineage>
</organism>
<reference key="1">
    <citation type="submission" date="2008-08" db="EMBL/GenBank/DDBJ databases">
        <title>Complete sequence of Vibrio fischeri strain MJ11.</title>
        <authorList>
            <person name="Mandel M.J."/>
            <person name="Stabb E.V."/>
            <person name="Ruby E.G."/>
            <person name="Ferriera S."/>
            <person name="Johnson J."/>
            <person name="Kravitz S."/>
            <person name="Beeson K."/>
            <person name="Sutton G."/>
            <person name="Rogers Y.-H."/>
            <person name="Friedman R."/>
            <person name="Frazier M."/>
            <person name="Venter J.C."/>
        </authorList>
    </citation>
    <scope>NUCLEOTIDE SEQUENCE [LARGE SCALE GENOMIC DNA]</scope>
    <source>
        <strain>MJ11</strain>
    </source>
</reference>
<name>ISPE_ALIFM</name>
<feature type="chain" id="PRO_1000092124" description="4-diphosphocytidyl-2-C-methyl-D-erythritol kinase">
    <location>
        <begin position="1"/>
        <end position="288"/>
    </location>
</feature>
<feature type="active site" evidence="1">
    <location>
        <position position="13"/>
    </location>
</feature>
<feature type="active site" evidence="1">
    <location>
        <position position="138"/>
    </location>
</feature>
<feature type="binding site" evidence="1">
    <location>
        <begin position="96"/>
        <end position="106"/>
    </location>
    <ligand>
        <name>ATP</name>
        <dbReference type="ChEBI" id="CHEBI:30616"/>
    </ligand>
</feature>
<protein>
    <recommendedName>
        <fullName evidence="1">4-diphosphocytidyl-2-C-methyl-D-erythritol kinase</fullName>
        <shortName evidence="1">CMK</shortName>
        <ecNumber evidence="1">2.7.1.148</ecNumber>
    </recommendedName>
    <alternativeName>
        <fullName evidence="1">4-(cytidine-5'-diphospho)-2-C-methyl-D-erythritol kinase</fullName>
    </alternativeName>
</protein>
<comment type="function">
    <text evidence="1">Catalyzes the phosphorylation of the position 2 hydroxy group of 4-diphosphocytidyl-2C-methyl-D-erythritol.</text>
</comment>
<comment type="catalytic activity">
    <reaction evidence="1">
        <text>4-CDP-2-C-methyl-D-erythritol + ATP = 4-CDP-2-C-methyl-D-erythritol 2-phosphate + ADP + H(+)</text>
        <dbReference type="Rhea" id="RHEA:18437"/>
        <dbReference type="ChEBI" id="CHEBI:15378"/>
        <dbReference type="ChEBI" id="CHEBI:30616"/>
        <dbReference type="ChEBI" id="CHEBI:57823"/>
        <dbReference type="ChEBI" id="CHEBI:57919"/>
        <dbReference type="ChEBI" id="CHEBI:456216"/>
        <dbReference type="EC" id="2.7.1.148"/>
    </reaction>
</comment>
<comment type="pathway">
    <text evidence="1">Isoprenoid biosynthesis; isopentenyl diphosphate biosynthesis via DXP pathway; isopentenyl diphosphate from 1-deoxy-D-xylulose 5-phosphate: step 3/6.</text>
</comment>
<comment type="similarity">
    <text evidence="1">Belongs to the GHMP kinase family. IspE subfamily.</text>
</comment>